<proteinExistence type="evidence at protein level"/>
<comment type="function">
    <text evidence="2">Component of the SEA complex which coats the vacuolar membrane and is involved in intracellular trafficking, autophagy, response to nitrogen starvation, and amino acid biogenesis.</text>
</comment>
<comment type="subunit">
    <text evidence="2">Component of the SEA complex composed of at least IML1/SEA1, RTC1/SEA2, MTC5/SEA3, NPR2, NPR3, SEA4, SEC13 and SEH1.</text>
</comment>
<comment type="interaction">
    <interactant intactId="EBI-21365">
        <id>P38164</id>
    </interactant>
    <interactant intactId="EBI-8666">
        <id>P15108</id>
        <label>HSC82</label>
    </interactant>
    <organismsDiffer>false</organismsDiffer>
    <experiments>2</experiments>
</comment>
<comment type="interaction">
    <interactant intactId="EBI-21365">
        <id>P38164</id>
    </interactant>
    <interactant intactId="EBI-16940">
        <id>P53011</id>
        <label>SEH1</label>
    </interactant>
    <organismsDiffer>false</organismsDiffer>
    <experiments>7</experiments>
</comment>
<comment type="subcellular location">
    <subcellularLocation>
        <location>Cytoplasm</location>
    </subcellularLocation>
    <subcellularLocation>
        <location>Vacuole membrane</location>
        <topology>Peripheral membrane protein</topology>
    </subcellularLocation>
</comment>
<comment type="miscellaneous">
    <text evidence="1">Present with 184 molecules/cell in log phase SD medium.</text>
</comment>
<comment type="similarity">
    <text evidence="3">Belongs to the WD repeat mio family.</text>
</comment>
<comment type="sequence caution" evidence="3">
    <conflict type="frameshift">
        <sequence resource="EMBL-CDS" id="CAA55991"/>
    </conflict>
</comment>
<comment type="sequence caution" evidence="3">
    <conflict type="frameshift">
        <sequence resource="EMBL-CDS" id="CAA84930"/>
    </conflict>
</comment>
<name>SEA4_YEAST</name>
<sequence length="1038" mass="117636">MGLIKKVTHWSYDNLIDYLSVNPTRDEVTHYKVDPENESDESIIKLHTVKDFGSITCLDYSESEIGMIGVGEKNGYLRIFNISGQNSSSPASHAPVGLNANNETSMTNASGGKAAQAENIVGSVSNLKDTQGYPVSETNYDIRVRAKKQRCINSLGINTNGLIAMGLDRNKHDSSLQIWDMNYHDDSHETINPMFSYCTNESIVSLKFLNDTSVLAASTKFLKEIDVRSPNPIYQHPTRLTYDIKLNPFNDWQFSTYGDDGTLAIWDRRKLSDQASLGDLNVASPLLTFEKLVGSGAASRKYMNSCFRWSCVRNNEFATLHRGDTIKRWRLGYYCDSNRDIAADDDNEMNIENLFVSSVHDTNTMYDRVATFDYIPRSNNGTSLICMRQSGTIYRMPISEVCSKAILNNRNSLLLSNFENTEIDEIRVNNEHEKSNLENVKTILKNLSFEDLDVSEDYFPSGHDEPNNEIEYSELSEEENEGSNDVLDSKRGFELFWKPEKLLEKDISVIMRTRASLGYGLDPMNTVEMIDSSKNLQNNAYIRNTWRWIAIAKASVDDGTMVSGDLDLGYEGVIGIWNGINGISNQDRYRQETILSDKQLNKEMEKIIKLRRKNRDRNSPIANAAGSPKYVQRRLCLIISGWDLSRSDYEDKYNIIMKNGHYEKAAAWAVFFGDIPKAVEILGSAKKERLRLIATAIAGYLAYKDLPGNNAWRQQCRKMSSELDDPYLRVIFAFIADNDWWDILYEPAISLRERLGVALRFLNDTDLTTFLDRTSSTVIENGELEGLILTGITPNGIDLLQSYVNKTSDVQSAALISIFGSPRYFRDQRVDEWIQTYRDMLKSWELFSMRARFDVLRSKLSRTKTGVLTADIKPRQIYIQCQNCKQNINTPRTSSPSSAVSTSAGNYKNGEAYRRNNADYKKFNTGSSEAQAADEKPRHKYCCPHCGSSFPRCAICLMPLGTSNLPFVINGTQSRDPMQTEDSQDGANRELVSRKLKLNEWFSFCLSCNHGMHAGHAEEWFDRHNVCPTPGCTCQCNK</sequence>
<dbReference type="EMBL" id="X79489">
    <property type="protein sequence ID" value="CAA55991.1"/>
    <property type="status" value="ALT_FRAME"/>
    <property type="molecule type" value="Genomic_DNA"/>
</dbReference>
<dbReference type="EMBL" id="Z35865">
    <property type="protein sequence ID" value="CAA84930.1"/>
    <property type="status" value="ALT_FRAME"/>
    <property type="molecule type" value="Genomic_DNA"/>
</dbReference>
<dbReference type="EMBL" id="AY260889">
    <property type="protein sequence ID" value="AAP21757.1"/>
    <property type="molecule type" value="Genomic_DNA"/>
</dbReference>
<dbReference type="EMBL" id="BK006936">
    <property type="protein sequence ID" value="DAA07019.1"/>
    <property type="molecule type" value="Genomic_DNA"/>
</dbReference>
<dbReference type="PIR" id="S45391">
    <property type="entry name" value="S45391"/>
</dbReference>
<dbReference type="RefSeq" id="NP_009446.2">
    <property type="nucleotide sequence ID" value="NM_001178344.1"/>
</dbReference>
<dbReference type="PDB" id="8ADL">
    <property type="method" value="EM"/>
    <property type="resolution" value="2.95 A"/>
    <property type="chains" value="B/G/J/O=1-1038"/>
</dbReference>
<dbReference type="PDBsum" id="8ADL"/>
<dbReference type="EMDB" id="EMD-15364"/>
<dbReference type="SMR" id="P38164"/>
<dbReference type="BioGRID" id="32599">
    <property type="interactions" value="189"/>
</dbReference>
<dbReference type="ComplexPortal" id="CPX-3231">
    <property type="entry name" value="SEA complex"/>
</dbReference>
<dbReference type="DIP" id="DIP-4369N"/>
<dbReference type="FunCoup" id="P38164">
    <property type="interactions" value="938"/>
</dbReference>
<dbReference type="IntAct" id="P38164">
    <property type="interactions" value="57"/>
</dbReference>
<dbReference type="MINT" id="P38164"/>
<dbReference type="STRING" id="4932.YBL104C"/>
<dbReference type="GlyGen" id="P38164">
    <property type="glycosylation" value="2 sites, 1 O-linked glycan (1 site)"/>
</dbReference>
<dbReference type="iPTMnet" id="P38164"/>
<dbReference type="PaxDb" id="4932-YBL104C"/>
<dbReference type="PeptideAtlas" id="P38164"/>
<dbReference type="EnsemblFungi" id="YBL104C_mRNA">
    <property type="protein sequence ID" value="YBL104C"/>
    <property type="gene ID" value="YBL104C"/>
</dbReference>
<dbReference type="GeneID" id="852170"/>
<dbReference type="KEGG" id="sce:YBL104C"/>
<dbReference type="AGR" id="SGD:S000000200"/>
<dbReference type="SGD" id="S000000200">
    <property type="gene designation" value="SEA4"/>
</dbReference>
<dbReference type="VEuPathDB" id="FungiDB:YBL104C"/>
<dbReference type="eggNOG" id="KOG1008">
    <property type="taxonomic scope" value="Eukaryota"/>
</dbReference>
<dbReference type="GeneTree" id="ENSGT00390000015038"/>
<dbReference type="HOGENOM" id="CLU_005843_0_0_1"/>
<dbReference type="InParanoid" id="P38164"/>
<dbReference type="OMA" id="GYMAYKD"/>
<dbReference type="OrthoDB" id="341486at2759"/>
<dbReference type="BioCyc" id="YEAST:G3O-28988-MONOMER"/>
<dbReference type="BioGRID-ORCS" id="852170">
    <property type="hits" value="0 hits in 10 CRISPR screens"/>
</dbReference>
<dbReference type="PRO" id="PR:P38164"/>
<dbReference type="Proteomes" id="UP000002311">
    <property type="component" value="Chromosome II"/>
</dbReference>
<dbReference type="RNAct" id="P38164">
    <property type="molecule type" value="protein"/>
</dbReference>
<dbReference type="GO" id="GO:0005737">
    <property type="term" value="C:cytoplasm"/>
    <property type="evidence" value="ECO:0007005"/>
    <property type="project" value="SGD"/>
</dbReference>
<dbReference type="GO" id="GO:0035859">
    <property type="term" value="C:Seh1-associated complex"/>
    <property type="evidence" value="ECO:0000314"/>
    <property type="project" value="SGD"/>
</dbReference>
<dbReference type="GO" id="GO:0005774">
    <property type="term" value="C:vacuolar membrane"/>
    <property type="evidence" value="ECO:0000303"/>
    <property type="project" value="ComplexPortal"/>
</dbReference>
<dbReference type="GO" id="GO:1904263">
    <property type="term" value="P:positive regulation of TORC1 signaling"/>
    <property type="evidence" value="ECO:0000316"/>
    <property type="project" value="SGD"/>
</dbReference>
<dbReference type="GO" id="GO:0015031">
    <property type="term" value="P:protein transport"/>
    <property type="evidence" value="ECO:0007669"/>
    <property type="project" value="UniProtKB-KW"/>
</dbReference>
<dbReference type="GO" id="GO:1903432">
    <property type="term" value="P:regulation of TORC1 signaling"/>
    <property type="evidence" value="ECO:0000314"/>
    <property type="project" value="ComplexPortal"/>
</dbReference>
<dbReference type="CDD" id="cd16691">
    <property type="entry name" value="mRING-H2-C3H3C2_Mio"/>
    <property type="match status" value="1"/>
</dbReference>
<dbReference type="Gene3D" id="2.130.10.10">
    <property type="entry name" value="YVTN repeat-like/Quinoprotein amine dehydrogenase"/>
    <property type="match status" value="1"/>
</dbReference>
<dbReference type="InterPro" id="IPR037593">
    <property type="entry name" value="MIOS/Sea4"/>
</dbReference>
<dbReference type="InterPro" id="IPR049092">
    <property type="entry name" value="MIOS_a-sol"/>
</dbReference>
<dbReference type="InterPro" id="IPR015943">
    <property type="entry name" value="WD40/YVTN_repeat-like_dom_sf"/>
</dbReference>
<dbReference type="InterPro" id="IPR036322">
    <property type="entry name" value="WD40_repeat_dom_sf"/>
</dbReference>
<dbReference type="InterPro" id="IPR031488">
    <property type="entry name" value="Zn_ribbon_mio"/>
</dbReference>
<dbReference type="PANTHER" id="PTHR16453:SF9">
    <property type="entry name" value="GATOR COMPLEX PROTEIN MIOS"/>
    <property type="match status" value="1"/>
</dbReference>
<dbReference type="PANTHER" id="PTHR16453">
    <property type="entry name" value="WD40 DOMAIN-CONTAINING PROTEIN MIO FAMILY MEMBER"/>
    <property type="match status" value="1"/>
</dbReference>
<dbReference type="Pfam" id="PF21719">
    <property type="entry name" value="MIOS_a-sol"/>
    <property type="match status" value="1"/>
</dbReference>
<dbReference type="Pfam" id="PF17034">
    <property type="entry name" value="zinc_ribbon_16"/>
    <property type="match status" value="1"/>
</dbReference>
<dbReference type="SUPFAM" id="SSF50978">
    <property type="entry name" value="WD40 repeat-like"/>
    <property type="match status" value="1"/>
</dbReference>
<gene>
    <name type="primary">SEA4</name>
    <name type="ordered locus">YBL104C</name>
    <name type="ORF">YBL0808</name>
    <name type="ORF">YBL103C-A</name>
</gene>
<feature type="chain" id="PRO_0000051470" description="SEH-associated protein 4">
    <location>
        <begin position="1"/>
        <end position="1038"/>
    </location>
</feature>
<feature type="repeat" description="WD 1">
    <location>
        <begin position="50"/>
        <end position="90"/>
    </location>
</feature>
<feature type="repeat" description="WD 2">
    <location>
        <begin position="147"/>
        <end position="189"/>
    </location>
</feature>
<feature type="repeat" description="WD 3">
    <location>
        <begin position="235"/>
        <end position="276"/>
    </location>
</feature>
<feature type="repeat" description="WD 4">
    <location>
        <begin position="544"/>
        <end position="587"/>
    </location>
</feature>
<feature type="modified residue" description="Phosphoserine" evidence="4">
    <location>
        <position position="123"/>
    </location>
</feature>
<feature type="modified residue" description="Phosphoserine" evidence="4">
    <location>
        <position position="136"/>
    </location>
</feature>
<feature type="strand" evidence="5">
    <location>
        <begin position="3"/>
        <end position="7"/>
    </location>
</feature>
<feature type="strand" evidence="5">
    <location>
        <begin position="12"/>
        <end position="14"/>
    </location>
</feature>
<feature type="strand" evidence="5">
    <location>
        <begin position="16"/>
        <end position="21"/>
    </location>
</feature>
<feature type="strand" evidence="5">
    <location>
        <begin position="28"/>
        <end position="33"/>
    </location>
</feature>
<feature type="helix" evidence="5">
    <location>
        <begin position="40"/>
        <end position="42"/>
    </location>
</feature>
<feature type="strand" evidence="5">
    <location>
        <begin position="44"/>
        <end position="49"/>
    </location>
</feature>
<feature type="strand" evidence="5">
    <location>
        <begin position="58"/>
        <end position="60"/>
    </location>
</feature>
<feature type="strand" evidence="5">
    <location>
        <begin position="62"/>
        <end position="64"/>
    </location>
</feature>
<feature type="strand" evidence="5">
    <location>
        <begin position="67"/>
        <end position="70"/>
    </location>
</feature>
<feature type="strand" evidence="5">
    <location>
        <begin position="73"/>
        <end position="75"/>
    </location>
</feature>
<feature type="strand" evidence="5">
    <location>
        <begin position="77"/>
        <end position="81"/>
    </location>
</feature>
<feature type="strand" evidence="5">
    <location>
        <begin position="141"/>
        <end position="145"/>
    </location>
</feature>
<feature type="strand" evidence="5">
    <location>
        <begin position="154"/>
        <end position="157"/>
    </location>
</feature>
<feature type="strand" evidence="5">
    <location>
        <begin position="159"/>
        <end position="166"/>
    </location>
</feature>
<feature type="strand" evidence="5">
    <location>
        <begin position="173"/>
        <end position="180"/>
    </location>
</feature>
<feature type="helix" evidence="5">
    <location>
        <begin position="181"/>
        <end position="183"/>
    </location>
</feature>
<feature type="strand" evidence="5">
    <location>
        <begin position="194"/>
        <end position="199"/>
    </location>
</feature>
<feature type="strand" evidence="5">
    <location>
        <begin position="205"/>
        <end position="207"/>
    </location>
</feature>
<feature type="strand" evidence="5">
    <location>
        <begin position="210"/>
        <end position="212"/>
    </location>
</feature>
<feature type="strand" evidence="5">
    <location>
        <begin position="214"/>
        <end position="217"/>
    </location>
</feature>
<feature type="strand" evidence="5">
    <location>
        <begin position="219"/>
        <end position="225"/>
    </location>
</feature>
<feature type="strand" evidence="5">
    <location>
        <begin position="235"/>
        <end position="237"/>
    </location>
</feature>
<feature type="strand" evidence="5">
    <location>
        <begin position="242"/>
        <end position="246"/>
    </location>
</feature>
<feature type="strand" evidence="5">
    <location>
        <begin position="253"/>
        <end position="257"/>
    </location>
</feature>
<feature type="strand" evidence="5">
    <location>
        <begin position="263"/>
        <end position="267"/>
    </location>
</feature>
<feature type="helix" evidence="5">
    <location>
        <begin position="268"/>
        <end position="272"/>
    </location>
</feature>
<feature type="strand" evidence="5">
    <location>
        <begin position="286"/>
        <end position="289"/>
    </location>
</feature>
<feature type="turn" evidence="5">
    <location>
        <begin position="297"/>
        <end position="299"/>
    </location>
</feature>
<feature type="strand" evidence="5">
    <location>
        <begin position="307"/>
        <end position="309"/>
    </location>
</feature>
<feature type="strand" evidence="5">
    <location>
        <begin position="311"/>
        <end position="321"/>
    </location>
</feature>
<feature type="turn" evidence="5">
    <location>
        <begin position="322"/>
        <end position="324"/>
    </location>
</feature>
<feature type="strand" evidence="5">
    <location>
        <begin position="325"/>
        <end position="334"/>
    </location>
</feature>
<feature type="strand" evidence="5">
    <location>
        <begin position="353"/>
        <end position="363"/>
    </location>
</feature>
<feature type="strand" evidence="5">
    <location>
        <begin position="365"/>
        <end position="367"/>
    </location>
</feature>
<feature type="strand" evidence="5">
    <location>
        <begin position="369"/>
        <end position="376"/>
    </location>
</feature>
<feature type="helix" evidence="5">
    <location>
        <begin position="378"/>
        <end position="380"/>
    </location>
</feature>
<feature type="strand" evidence="5">
    <location>
        <begin position="382"/>
        <end position="388"/>
    </location>
</feature>
<feature type="strand" evidence="5">
    <location>
        <begin position="393"/>
        <end position="397"/>
    </location>
</feature>
<feature type="strand" evidence="5">
    <location>
        <begin position="402"/>
        <end position="406"/>
    </location>
</feature>
<feature type="strand" evidence="5">
    <location>
        <begin position="413"/>
        <end position="421"/>
    </location>
</feature>
<feature type="strand" evidence="5">
    <location>
        <begin position="423"/>
        <end position="426"/>
    </location>
</feature>
<feature type="helix" evidence="5">
    <location>
        <begin position="499"/>
        <end position="505"/>
    </location>
</feature>
<feature type="helix" evidence="5">
    <location>
        <begin position="507"/>
        <end position="517"/>
    </location>
</feature>
<feature type="strand" evidence="5">
    <location>
        <begin position="520"/>
        <end position="522"/>
    </location>
</feature>
<feature type="helix" evidence="5">
    <location>
        <begin position="523"/>
        <end position="531"/>
    </location>
</feature>
<feature type="helix" evidence="5">
    <location>
        <begin position="541"/>
        <end position="557"/>
    </location>
</feature>
<feature type="turn" evidence="5">
    <location>
        <begin position="558"/>
        <end position="562"/>
    </location>
</feature>
<feature type="strand" evidence="5">
    <location>
        <begin position="564"/>
        <end position="566"/>
    </location>
</feature>
<feature type="helix" evidence="5">
    <location>
        <begin position="573"/>
        <end position="578"/>
    </location>
</feature>
<feature type="helix" evidence="5">
    <location>
        <begin position="597"/>
        <end position="608"/>
    </location>
</feature>
<feature type="helix" evidence="5">
    <location>
        <begin position="630"/>
        <end position="639"/>
    </location>
</feature>
<feature type="helix" evidence="5">
    <location>
        <begin position="646"/>
        <end position="659"/>
    </location>
</feature>
<feature type="helix" evidence="5">
    <location>
        <begin position="662"/>
        <end position="672"/>
    </location>
</feature>
<feature type="helix" evidence="5">
    <location>
        <begin position="675"/>
        <end position="682"/>
    </location>
</feature>
<feature type="helix" evidence="5">
    <location>
        <begin position="688"/>
        <end position="698"/>
    </location>
</feature>
<feature type="turn" evidence="5">
    <location>
        <begin position="699"/>
        <end position="705"/>
    </location>
</feature>
<feature type="helix" evidence="5">
    <location>
        <begin position="711"/>
        <end position="722"/>
    </location>
</feature>
<feature type="helix" evidence="5">
    <location>
        <begin position="726"/>
        <end position="736"/>
    </location>
</feature>
<feature type="helix" evidence="5">
    <location>
        <begin position="741"/>
        <end position="744"/>
    </location>
</feature>
<feature type="helix" evidence="5">
    <location>
        <begin position="751"/>
        <end position="760"/>
    </location>
</feature>
<feature type="helix" evidence="5">
    <location>
        <begin position="764"/>
        <end position="781"/>
    </location>
</feature>
<feature type="helix" evidence="5">
    <location>
        <begin position="784"/>
        <end position="786"/>
    </location>
</feature>
<feature type="helix" evidence="5">
    <location>
        <begin position="787"/>
        <end position="790"/>
    </location>
</feature>
<feature type="strand" evidence="5">
    <location>
        <begin position="791"/>
        <end position="793"/>
    </location>
</feature>
<feature type="helix" evidence="5">
    <location>
        <begin position="794"/>
        <end position="807"/>
    </location>
</feature>
<feature type="helix" evidence="5">
    <location>
        <begin position="810"/>
        <end position="817"/>
    </location>
</feature>
<feature type="turn" evidence="5">
    <location>
        <begin position="818"/>
        <end position="820"/>
    </location>
</feature>
<feature type="helix" evidence="5">
    <location>
        <begin position="821"/>
        <end position="824"/>
    </location>
</feature>
<feature type="helix" evidence="5">
    <location>
        <begin position="828"/>
        <end position="843"/>
    </location>
</feature>
<feature type="helix" evidence="5">
    <location>
        <begin position="847"/>
        <end position="860"/>
    </location>
</feature>
<feature type="strand" evidence="5">
    <location>
        <begin position="877"/>
        <end position="879"/>
    </location>
</feature>
<feature type="strand" evidence="5">
    <location>
        <begin position="882"/>
        <end position="884"/>
    </location>
</feature>
<feature type="turn" evidence="5">
    <location>
        <begin position="944"/>
        <end position="946"/>
    </location>
</feature>
<feature type="turn" evidence="5">
    <location>
        <begin position="954"/>
        <end position="956"/>
    </location>
</feature>
<feature type="helix" evidence="5">
    <location>
        <begin position="989"/>
        <end position="994"/>
    </location>
</feature>
<feature type="turn" evidence="5">
    <location>
        <begin position="1006"/>
        <end position="1008"/>
    </location>
</feature>
<feature type="helix" evidence="5">
    <location>
        <begin position="1014"/>
        <end position="1021"/>
    </location>
</feature>
<reference key="1">
    <citation type="journal article" date="1995" name="Yeast">
        <title>Sequence analysis of a 78.6 kb segment of the left end of Saccharomyces cerevisiae chromosome II.</title>
        <authorList>
            <person name="Obermaier B."/>
            <person name="Gassenhuber J."/>
            <person name="Piravandi E."/>
            <person name="Domdey H."/>
        </authorList>
    </citation>
    <scope>NUCLEOTIDE SEQUENCE [GENOMIC DNA]</scope>
    <source>
        <strain>ATCC 204508 / S288c</strain>
    </source>
</reference>
<reference key="2">
    <citation type="journal article" date="1994" name="EMBO J.">
        <title>Complete DNA sequence of yeast chromosome II.</title>
        <authorList>
            <person name="Feldmann H."/>
            <person name="Aigle M."/>
            <person name="Aljinovic G."/>
            <person name="Andre B."/>
            <person name="Baclet M.C."/>
            <person name="Barthe C."/>
            <person name="Baur A."/>
            <person name="Becam A.-M."/>
            <person name="Biteau N."/>
            <person name="Boles E."/>
            <person name="Brandt T."/>
            <person name="Brendel M."/>
            <person name="Brueckner M."/>
            <person name="Bussereau F."/>
            <person name="Christiansen C."/>
            <person name="Contreras R."/>
            <person name="Crouzet M."/>
            <person name="Cziepluch C."/>
            <person name="Demolis N."/>
            <person name="Delaveau T."/>
            <person name="Doignon F."/>
            <person name="Domdey H."/>
            <person name="Duesterhus S."/>
            <person name="Dubois E."/>
            <person name="Dujon B."/>
            <person name="El Bakkoury M."/>
            <person name="Entian K.-D."/>
            <person name="Feuermann M."/>
            <person name="Fiers W."/>
            <person name="Fobo G.M."/>
            <person name="Fritz C."/>
            <person name="Gassenhuber J."/>
            <person name="Glansdorff N."/>
            <person name="Goffeau A."/>
            <person name="Grivell L.A."/>
            <person name="de Haan M."/>
            <person name="Hein C."/>
            <person name="Herbert C.J."/>
            <person name="Hollenberg C.P."/>
            <person name="Holmstroem K."/>
            <person name="Jacq C."/>
            <person name="Jacquet M."/>
            <person name="Jauniaux J.-C."/>
            <person name="Jonniaux J.-L."/>
            <person name="Kallesoee T."/>
            <person name="Kiesau P."/>
            <person name="Kirchrath L."/>
            <person name="Koetter P."/>
            <person name="Korol S."/>
            <person name="Liebl S."/>
            <person name="Logghe M."/>
            <person name="Lohan A.J.E."/>
            <person name="Louis E.J."/>
            <person name="Li Z.Y."/>
            <person name="Maat M.J."/>
            <person name="Mallet L."/>
            <person name="Mannhaupt G."/>
            <person name="Messenguy F."/>
            <person name="Miosga T."/>
            <person name="Molemans F."/>
            <person name="Mueller S."/>
            <person name="Nasr F."/>
            <person name="Obermaier B."/>
            <person name="Perea J."/>
            <person name="Pierard A."/>
            <person name="Piravandi E."/>
            <person name="Pohl F.M."/>
            <person name="Pohl T.M."/>
            <person name="Potier S."/>
            <person name="Proft M."/>
            <person name="Purnelle B."/>
            <person name="Ramezani Rad M."/>
            <person name="Rieger M."/>
            <person name="Rose M."/>
            <person name="Schaaff-Gerstenschlaeger I."/>
            <person name="Scherens B."/>
            <person name="Schwarzlose C."/>
            <person name="Skala J."/>
            <person name="Slonimski P.P."/>
            <person name="Smits P.H.M."/>
            <person name="Souciet J.-L."/>
            <person name="Steensma H.Y."/>
            <person name="Stucka R."/>
            <person name="Urrestarazu L.A."/>
            <person name="van der Aart Q.J.M."/>
            <person name="Van Dyck L."/>
            <person name="Vassarotti A."/>
            <person name="Vetter I."/>
            <person name="Vierendeels F."/>
            <person name="Vissers S."/>
            <person name="Wagner G."/>
            <person name="de Wergifosse P."/>
            <person name="Wolfe K.H."/>
            <person name="Zagulski M."/>
            <person name="Zimmermann F.K."/>
            <person name="Mewes H.-W."/>
            <person name="Kleine K."/>
        </authorList>
    </citation>
    <scope>NUCLEOTIDE SEQUENCE [LARGE SCALE GENOMIC DNA]</scope>
    <source>
        <strain>ATCC 204508 / S288c</strain>
    </source>
</reference>
<reference key="3">
    <citation type="journal article" date="2014" name="G3 (Bethesda)">
        <title>The reference genome sequence of Saccharomyces cerevisiae: Then and now.</title>
        <authorList>
            <person name="Engel S.R."/>
            <person name="Dietrich F.S."/>
            <person name="Fisk D.G."/>
            <person name="Binkley G."/>
            <person name="Balakrishnan R."/>
            <person name="Costanzo M.C."/>
            <person name="Dwight S.S."/>
            <person name="Hitz B.C."/>
            <person name="Karra K."/>
            <person name="Nash R.S."/>
            <person name="Weng S."/>
            <person name="Wong E.D."/>
            <person name="Lloyd P."/>
            <person name="Skrzypek M.S."/>
            <person name="Miyasato S.R."/>
            <person name="Simison M."/>
            <person name="Cherry J.M."/>
        </authorList>
    </citation>
    <scope>GENOME REANNOTATION</scope>
    <source>
        <strain>ATCC 204508 / S288c</strain>
    </source>
</reference>
<reference key="4">
    <citation type="journal article" date="2003" name="Genome Biol.">
        <title>Reinvestigation of the Saccharomyces cerevisiae genome annotation by comparison to the genome of a related fungus: Ashbya gossypii.</title>
        <authorList>
            <person name="Brachat S."/>
            <person name="Dietrich F.S."/>
            <person name="Voegeli S."/>
            <person name="Zhang Z."/>
            <person name="Stuart L."/>
            <person name="Lerch A."/>
            <person name="Gates K."/>
            <person name="Gaffney T.D."/>
            <person name="Philippsen P."/>
        </authorList>
    </citation>
    <scope>NUCLEOTIDE SEQUENCE [GENOMIC DNA] OF 942-1001</scope>
    <scope>IDENTIFICATION OF FRAMESHIFT</scope>
    <source>
        <strain>ATCC 204511 / S288c / AB972</strain>
    </source>
</reference>
<reference key="5">
    <citation type="journal article" date="2003" name="Nature">
        <title>Sequencing and comparison of yeast species to identify genes and regulatory elements.</title>
        <authorList>
            <person name="Kellis M."/>
            <person name="Patterson N."/>
            <person name="Endrizzi M."/>
            <person name="Birren B.W."/>
            <person name="Lander E.S."/>
        </authorList>
    </citation>
    <scope>IDENTIFICATION OF FRAMESHIFTS</scope>
</reference>
<reference key="6">
    <citation type="journal article" date="2003" name="Nature">
        <title>Global analysis of protein localization in budding yeast.</title>
        <authorList>
            <person name="Huh W.-K."/>
            <person name="Falvo J.V."/>
            <person name="Gerke L.C."/>
            <person name="Carroll A.S."/>
            <person name="Howson R.W."/>
            <person name="Weissman J.S."/>
            <person name="O'Shea E.K."/>
        </authorList>
    </citation>
    <scope>SUBCELLULAR LOCATION [LARGE SCALE ANALYSIS]</scope>
</reference>
<reference key="7">
    <citation type="journal article" date="2003" name="Nature">
        <title>Global analysis of protein expression in yeast.</title>
        <authorList>
            <person name="Ghaemmaghami S."/>
            <person name="Huh W.-K."/>
            <person name="Bower K."/>
            <person name="Howson R.W."/>
            <person name="Belle A."/>
            <person name="Dephoure N."/>
            <person name="O'Shea E.K."/>
            <person name="Weissman J.S."/>
        </authorList>
    </citation>
    <scope>LEVEL OF PROTEIN EXPRESSION [LARGE SCALE ANALYSIS]</scope>
</reference>
<reference key="8">
    <citation type="journal article" date="2003" name="Science">
        <title>Finding functional features in Saccharomyces genomes by phylogenetic footprinting.</title>
        <authorList>
            <person name="Cliften P.F."/>
            <person name="Sudarsanam P."/>
            <person name="Desikan A."/>
            <person name="Fulton L."/>
            <person name="Fulton B."/>
            <person name="Majors J."/>
            <person name="Waterston R."/>
            <person name="Cohen B.A."/>
            <person name="Johnston M."/>
        </authorList>
    </citation>
    <scope>IDENTIFICATION OF FRAMESHIFT</scope>
</reference>
<reference key="9">
    <citation type="journal article" date="2008" name="Mol. Cell. Proteomics">
        <title>A multidimensional chromatography technology for in-depth phosphoproteome analysis.</title>
        <authorList>
            <person name="Albuquerque C.P."/>
            <person name="Smolka M.B."/>
            <person name="Payne S.H."/>
            <person name="Bafna V."/>
            <person name="Eng J."/>
            <person name="Zhou H."/>
        </authorList>
    </citation>
    <scope>PHOSPHORYLATION [LARGE SCALE ANALYSIS] AT SER-123 AND SER-136</scope>
    <scope>IDENTIFICATION BY MASS SPECTROMETRY [LARGE SCALE ANALYSIS]</scope>
</reference>
<reference key="10">
    <citation type="journal article" date="2009" name="Science">
        <title>Global analysis of Cdk1 substrate phosphorylation sites provides insights into evolution.</title>
        <authorList>
            <person name="Holt L.J."/>
            <person name="Tuch B.B."/>
            <person name="Villen J."/>
            <person name="Johnson A.D."/>
            <person name="Gygi S.P."/>
            <person name="Morgan D.O."/>
        </authorList>
    </citation>
    <scope>IDENTIFICATION BY MASS SPECTROMETRY [LARGE SCALE ANALYSIS]</scope>
</reference>
<reference key="11">
    <citation type="journal article" date="2011" name="Mol. Cell. Proteomics">
        <title>A conserved coatomer-related complex containing Sec13 and Seh1 dynamically associates with the vacuole in Saccharomyces cerevisiae.</title>
        <authorList>
            <person name="Dokudovskaya S."/>
            <person name="Waharte F."/>
            <person name="Schlessinger A."/>
            <person name="Pieper U."/>
            <person name="Devos D.P."/>
            <person name="Cristea I.M."/>
            <person name="Williams R."/>
            <person name="Salamero J."/>
            <person name="Chait B.T."/>
            <person name="Sali A."/>
            <person name="Field M.C."/>
            <person name="Rout M.P."/>
            <person name="Dargemont C."/>
        </authorList>
    </citation>
    <scope>SUBCELLULAR LOCATION</scope>
    <scope>IDENTIFICATION IN THE SEA COMPLEX</scope>
    <scope>FUNCTION</scope>
</reference>
<protein>
    <recommendedName>
        <fullName>SEH-associated protein 4</fullName>
    </recommendedName>
</protein>
<evidence type="ECO:0000269" key="1">
    <source>
    </source>
</evidence>
<evidence type="ECO:0000269" key="2">
    <source>
    </source>
</evidence>
<evidence type="ECO:0000305" key="3"/>
<evidence type="ECO:0007744" key="4">
    <source>
    </source>
</evidence>
<evidence type="ECO:0007829" key="5">
    <source>
        <dbReference type="PDB" id="8ADL"/>
    </source>
</evidence>
<accession>P38164</accession>
<accession>D6VPP9</accession>
<accession>Q86ZS4</accession>
<keyword id="KW-0002">3D-structure</keyword>
<keyword id="KW-0963">Cytoplasm</keyword>
<keyword id="KW-0472">Membrane</keyword>
<keyword id="KW-0597">Phosphoprotein</keyword>
<keyword id="KW-0653">Protein transport</keyword>
<keyword id="KW-1185">Reference proteome</keyword>
<keyword id="KW-0677">Repeat</keyword>
<keyword id="KW-0813">Transport</keyword>
<keyword id="KW-0926">Vacuole</keyword>
<keyword id="KW-0853">WD repeat</keyword>
<organism>
    <name type="scientific">Saccharomyces cerevisiae (strain ATCC 204508 / S288c)</name>
    <name type="common">Baker's yeast</name>
    <dbReference type="NCBI Taxonomy" id="559292"/>
    <lineage>
        <taxon>Eukaryota</taxon>
        <taxon>Fungi</taxon>
        <taxon>Dikarya</taxon>
        <taxon>Ascomycota</taxon>
        <taxon>Saccharomycotina</taxon>
        <taxon>Saccharomycetes</taxon>
        <taxon>Saccharomycetales</taxon>
        <taxon>Saccharomycetaceae</taxon>
        <taxon>Saccharomyces</taxon>
    </lineage>
</organism>